<proteinExistence type="evidence at transcript level"/>
<comment type="function">
    <text evidence="3">Could play a role in cell proliferation during neuronal differentiation and in protection against cell death.</text>
</comment>
<comment type="subunit">
    <text evidence="2 3">Interacts with CLN5. Interacts with CLN3 (By similarity).</text>
</comment>
<comment type="subcellular location">
    <subcellularLocation>
        <location evidence="3">Endoplasmic reticulum membrane</location>
        <topology evidence="4">Multi-pass membrane protein</topology>
    </subcellularLocation>
    <subcellularLocation>
        <location evidence="3">Endoplasmic reticulum-Golgi intermediate compartment membrane</location>
        <topology evidence="4">Multi-pass membrane protein</topology>
    </subcellularLocation>
    <subcellularLocation>
        <location evidence="3">Endoplasmic reticulum</location>
    </subcellularLocation>
</comment>
<name>CLN8_RAT</name>
<keyword id="KW-0256">Endoplasmic reticulum</keyword>
<keyword id="KW-0472">Membrane</keyword>
<keyword id="KW-1185">Reference proteome</keyword>
<keyword id="KW-0812">Transmembrane</keyword>
<keyword id="KW-1133">Transmembrane helix</keyword>
<accession>Q6AYM9</accession>
<protein>
    <recommendedName>
        <fullName>Protein CLN8</fullName>
    </recommendedName>
</protein>
<organism>
    <name type="scientific">Rattus norvegicus</name>
    <name type="common">Rat</name>
    <dbReference type="NCBI Taxonomy" id="10116"/>
    <lineage>
        <taxon>Eukaryota</taxon>
        <taxon>Metazoa</taxon>
        <taxon>Chordata</taxon>
        <taxon>Craniata</taxon>
        <taxon>Vertebrata</taxon>
        <taxon>Euteleostomi</taxon>
        <taxon>Mammalia</taxon>
        <taxon>Eutheria</taxon>
        <taxon>Euarchontoglires</taxon>
        <taxon>Glires</taxon>
        <taxon>Rodentia</taxon>
        <taxon>Myomorpha</taxon>
        <taxon>Muroidea</taxon>
        <taxon>Muridae</taxon>
        <taxon>Murinae</taxon>
        <taxon>Rattus</taxon>
    </lineage>
</organism>
<gene>
    <name type="primary">Cln8</name>
</gene>
<evidence type="ECO:0000250" key="1"/>
<evidence type="ECO:0000250" key="2">
    <source>
        <dbReference type="UniProtKB" id="Q9QUK3"/>
    </source>
</evidence>
<evidence type="ECO:0000250" key="3">
    <source>
        <dbReference type="UniProtKB" id="Q9UBY8"/>
    </source>
</evidence>
<evidence type="ECO:0000255" key="4"/>
<evidence type="ECO:0000255" key="5">
    <source>
        <dbReference type="PROSITE-ProRule" id="PRU00205"/>
    </source>
</evidence>
<feature type="chain" id="PRO_0000185539" description="Protein CLN8">
    <location>
        <begin position="1"/>
        <end position="288"/>
    </location>
</feature>
<feature type="transmembrane region" description="Helical" evidence="4">
    <location>
        <begin position="26"/>
        <end position="46"/>
    </location>
</feature>
<feature type="transmembrane region" description="Helical" evidence="4">
    <location>
        <begin position="71"/>
        <end position="91"/>
    </location>
</feature>
<feature type="transmembrane region" description="Helical" evidence="4">
    <location>
        <begin position="103"/>
        <end position="123"/>
    </location>
</feature>
<feature type="transmembrane region" description="Helical" evidence="4">
    <location>
        <begin position="131"/>
        <end position="151"/>
    </location>
</feature>
<feature type="transmembrane region" description="Helical" evidence="4">
    <location>
        <begin position="225"/>
        <end position="245"/>
    </location>
</feature>
<feature type="domain" description="TLC" evidence="5">
    <location>
        <begin position="62"/>
        <end position="262"/>
    </location>
</feature>
<feature type="short sequence motif" description="ER-retrieval signal" evidence="1">
    <location>
        <begin position="285"/>
        <end position="288"/>
    </location>
</feature>
<dbReference type="EMBL" id="BC078982">
    <property type="protein sequence ID" value="AAH78982.1"/>
    <property type="molecule type" value="mRNA"/>
</dbReference>
<dbReference type="RefSeq" id="NP_001007687.1">
    <property type="nucleotide sequence ID" value="NM_001007686.1"/>
</dbReference>
<dbReference type="RefSeq" id="XP_006253456.1">
    <property type="nucleotide sequence ID" value="XM_006253394.5"/>
</dbReference>
<dbReference type="FunCoup" id="Q6AYM9">
    <property type="interactions" value="783"/>
</dbReference>
<dbReference type="STRING" id="10116.ENSRNOP00000016756"/>
<dbReference type="PhosphoSitePlus" id="Q6AYM9"/>
<dbReference type="PaxDb" id="10116-ENSRNOP00000016756"/>
<dbReference type="Ensembl" id="ENSRNOT00000016756.5">
    <property type="protein sequence ID" value="ENSRNOP00000016756.3"/>
    <property type="gene ID" value="ENSRNOG00000012565.5"/>
</dbReference>
<dbReference type="GeneID" id="306619"/>
<dbReference type="KEGG" id="rno:306619"/>
<dbReference type="UCSC" id="RGD:1359518">
    <property type="organism name" value="rat"/>
</dbReference>
<dbReference type="AGR" id="RGD:1359518"/>
<dbReference type="CTD" id="2055"/>
<dbReference type="RGD" id="1359518">
    <property type="gene designation" value="Cln8"/>
</dbReference>
<dbReference type="eggNOG" id="KOG4561">
    <property type="taxonomic scope" value="Eukaryota"/>
</dbReference>
<dbReference type="GeneTree" id="ENSGT01010000222313"/>
<dbReference type="HOGENOM" id="CLU_951678_0_0_1"/>
<dbReference type="InParanoid" id="Q6AYM9"/>
<dbReference type="OMA" id="FFRTFDL"/>
<dbReference type="OrthoDB" id="51727at9989"/>
<dbReference type="PhylomeDB" id="Q6AYM9"/>
<dbReference type="TreeFam" id="TF331146"/>
<dbReference type="PRO" id="PR:Q6AYM9"/>
<dbReference type="Proteomes" id="UP000002494">
    <property type="component" value="Chromosome 16"/>
</dbReference>
<dbReference type="Bgee" id="ENSRNOG00000012565">
    <property type="expression patterns" value="Expressed in spleen and 20 other cell types or tissues"/>
</dbReference>
<dbReference type="GO" id="GO:0005783">
    <property type="term" value="C:endoplasmic reticulum"/>
    <property type="evidence" value="ECO:0000250"/>
    <property type="project" value="UniProtKB"/>
</dbReference>
<dbReference type="GO" id="GO:0005789">
    <property type="term" value="C:endoplasmic reticulum membrane"/>
    <property type="evidence" value="ECO:0007669"/>
    <property type="project" value="UniProtKB-SubCell"/>
</dbReference>
<dbReference type="GO" id="GO:0005793">
    <property type="term" value="C:endoplasmic reticulum-Golgi intermediate compartment"/>
    <property type="evidence" value="ECO:0000250"/>
    <property type="project" value="UniProtKB"/>
</dbReference>
<dbReference type="GO" id="GO:0033116">
    <property type="term" value="C:endoplasmic reticulum-Golgi intermediate compartment membrane"/>
    <property type="evidence" value="ECO:0007669"/>
    <property type="project" value="UniProtKB-SubCell"/>
</dbReference>
<dbReference type="GO" id="GO:0005739">
    <property type="term" value="C:mitochondrion"/>
    <property type="evidence" value="ECO:0007669"/>
    <property type="project" value="GOC"/>
</dbReference>
<dbReference type="GO" id="GO:0098793">
    <property type="term" value="C:presynapse"/>
    <property type="evidence" value="ECO:0007669"/>
    <property type="project" value="GOC"/>
</dbReference>
<dbReference type="GO" id="GO:0097001">
    <property type="term" value="F:ceramide binding"/>
    <property type="evidence" value="ECO:0000250"/>
    <property type="project" value="UniProtKB"/>
</dbReference>
<dbReference type="GO" id="GO:0008344">
    <property type="term" value="P:adult locomotory behavior"/>
    <property type="evidence" value="ECO:0000266"/>
    <property type="project" value="RGD"/>
</dbReference>
<dbReference type="GO" id="GO:0007628">
    <property type="term" value="P:adult walking behavior"/>
    <property type="evidence" value="ECO:0000266"/>
    <property type="project" value="RGD"/>
</dbReference>
<dbReference type="GO" id="GO:0006915">
    <property type="term" value="P:apoptotic process"/>
    <property type="evidence" value="ECO:0000266"/>
    <property type="project" value="RGD"/>
</dbReference>
<dbReference type="GO" id="GO:0008306">
    <property type="term" value="P:associative learning"/>
    <property type="evidence" value="ECO:0000266"/>
    <property type="project" value="RGD"/>
</dbReference>
<dbReference type="GO" id="GO:0006672">
    <property type="term" value="P:ceramide metabolic process"/>
    <property type="evidence" value="ECO:0000250"/>
    <property type="project" value="UniProtKB"/>
</dbReference>
<dbReference type="GO" id="GO:0008203">
    <property type="term" value="P:cholesterol metabolic process"/>
    <property type="evidence" value="ECO:0000250"/>
    <property type="project" value="UniProtKB"/>
</dbReference>
<dbReference type="GO" id="GO:0051935">
    <property type="term" value="P:glutamate reuptake"/>
    <property type="evidence" value="ECO:0000266"/>
    <property type="project" value="RGD"/>
</dbReference>
<dbReference type="GO" id="GO:0055088">
    <property type="term" value="P:lipid homeostasis"/>
    <property type="evidence" value="ECO:0000318"/>
    <property type="project" value="GO_Central"/>
</dbReference>
<dbReference type="GO" id="GO:0007040">
    <property type="term" value="P:lysosome organization"/>
    <property type="evidence" value="ECO:0000266"/>
    <property type="project" value="RGD"/>
</dbReference>
<dbReference type="GO" id="GO:0009057">
    <property type="term" value="P:macromolecule catabolic process"/>
    <property type="evidence" value="ECO:0000266"/>
    <property type="project" value="RGD"/>
</dbReference>
<dbReference type="GO" id="GO:0007006">
    <property type="term" value="P:mitochondrial membrane organization"/>
    <property type="evidence" value="ECO:0000266"/>
    <property type="project" value="RGD"/>
</dbReference>
<dbReference type="GO" id="GO:0050881">
    <property type="term" value="P:musculoskeletal movement"/>
    <property type="evidence" value="ECO:0000266"/>
    <property type="project" value="RGD"/>
</dbReference>
<dbReference type="GO" id="GO:0043524">
    <property type="term" value="P:negative regulation of neuron apoptotic process"/>
    <property type="evidence" value="ECO:0000266"/>
    <property type="project" value="RGD"/>
</dbReference>
<dbReference type="GO" id="GO:0007399">
    <property type="term" value="P:nervous system development"/>
    <property type="evidence" value="ECO:0000250"/>
    <property type="project" value="UniProtKB"/>
</dbReference>
<dbReference type="GO" id="GO:0060052">
    <property type="term" value="P:neurofilament cytoskeleton organization"/>
    <property type="evidence" value="ECO:0000266"/>
    <property type="project" value="RGD"/>
</dbReference>
<dbReference type="GO" id="GO:0050885">
    <property type="term" value="P:neuromuscular process controlling balance"/>
    <property type="evidence" value="ECO:0000266"/>
    <property type="project" value="RGD"/>
</dbReference>
<dbReference type="GO" id="GO:0050884">
    <property type="term" value="P:neuromuscular process controlling posture"/>
    <property type="evidence" value="ECO:0000266"/>
    <property type="project" value="RGD"/>
</dbReference>
<dbReference type="GO" id="GO:0051402">
    <property type="term" value="P:neuron apoptotic process"/>
    <property type="evidence" value="ECO:0000266"/>
    <property type="project" value="RGD"/>
</dbReference>
<dbReference type="GO" id="GO:0006644">
    <property type="term" value="P:phospholipid metabolic process"/>
    <property type="evidence" value="ECO:0000250"/>
    <property type="project" value="UniProtKB"/>
</dbReference>
<dbReference type="GO" id="GO:0045494">
    <property type="term" value="P:photoreceptor cell maintenance"/>
    <property type="evidence" value="ECO:0000266"/>
    <property type="project" value="RGD"/>
</dbReference>
<dbReference type="GO" id="GO:0030163">
    <property type="term" value="P:protein catabolic process"/>
    <property type="evidence" value="ECO:0000266"/>
    <property type="project" value="RGD"/>
</dbReference>
<dbReference type="GO" id="GO:0008361">
    <property type="term" value="P:regulation of cell size"/>
    <property type="evidence" value="ECO:0000266"/>
    <property type="project" value="RGD"/>
</dbReference>
<dbReference type="GO" id="GO:0060041">
    <property type="term" value="P:retina development in camera-type eye"/>
    <property type="evidence" value="ECO:0000266"/>
    <property type="project" value="RGD"/>
</dbReference>
<dbReference type="GO" id="GO:0097473">
    <property type="term" value="P:retinal rod cell apoptotic process"/>
    <property type="evidence" value="ECO:0000266"/>
    <property type="project" value="RGD"/>
</dbReference>
<dbReference type="GO" id="GO:0035176">
    <property type="term" value="P:social behavior"/>
    <property type="evidence" value="ECO:0000266"/>
    <property type="project" value="RGD"/>
</dbReference>
<dbReference type="GO" id="GO:0021523">
    <property type="term" value="P:somatic motor neuron differentiation"/>
    <property type="evidence" value="ECO:0000266"/>
    <property type="project" value="RGD"/>
</dbReference>
<dbReference type="GO" id="GO:0021522">
    <property type="term" value="P:spinal cord motor neuron differentiation"/>
    <property type="evidence" value="ECO:0000266"/>
    <property type="project" value="RGD"/>
</dbReference>
<dbReference type="GO" id="GO:0007601">
    <property type="term" value="P:visual perception"/>
    <property type="evidence" value="ECO:0000266"/>
    <property type="project" value="RGD"/>
</dbReference>
<dbReference type="InterPro" id="IPR006634">
    <property type="entry name" value="TLC-dom"/>
</dbReference>
<dbReference type="InterPro" id="IPR050846">
    <property type="entry name" value="TLCD"/>
</dbReference>
<dbReference type="PANTHER" id="PTHR13439">
    <property type="entry name" value="CT120 PROTEIN"/>
    <property type="match status" value="1"/>
</dbReference>
<dbReference type="PANTHER" id="PTHR13439:SF7">
    <property type="entry name" value="PROTEIN CLN8"/>
    <property type="match status" value="1"/>
</dbReference>
<dbReference type="Pfam" id="PF03798">
    <property type="entry name" value="TRAM_LAG1_CLN8"/>
    <property type="match status" value="1"/>
</dbReference>
<dbReference type="SMART" id="SM00724">
    <property type="entry name" value="TLC"/>
    <property type="match status" value="1"/>
</dbReference>
<dbReference type="PROSITE" id="PS50922">
    <property type="entry name" value="TLC"/>
    <property type="match status" value="1"/>
</dbReference>
<sequence length="288" mass="33120">MTPVSNHGVAESIFDLDYASWKIRSTLAVAGFVFYLGVFVVCHQLSSSLNATYRSLLAKEKVFWNLAATRAVFGIQSTAAGLWALLGDPVLYSNKALGQQNWCWFHITTATGFFFFENAAVHLSNLFFRTFDLFLVVHHLFAFLGFLGSAVNLRAGHYLAMTTLLLEMSTPFTCVSWMLLKAGWSHSLFWKVNQWLMIHMFHCRMILTYHMWWVCFQHWDALASSLYLPHLALFLFGLALLTVIINPYWTHKKTQQLLNPVDWNFAQPEAKGDRQERTNGQVPRKKRL</sequence>
<reference key="1">
    <citation type="journal article" date="2004" name="Genome Res.">
        <title>The status, quality, and expansion of the NIH full-length cDNA project: the Mammalian Gene Collection (MGC).</title>
        <authorList>
            <consortium name="The MGC Project Team"/>
        </authorList>
    </citation>
    <scope>NUCLEOTIDE SEQUENCE [LARGE SCALE MRNA]</scope>
    <source>
        <tissue>Testis</tissue>
    </source>
</reference>